<accession>F5B8W8</accession>
<accession>P09930</accession>
<accession>P09931</accession>
<organism>
    <name type="scientific">Lupinus angustifolius</name>
    <name type="common">Narrow-leaved blue lupine</name>
    <dbReference type="NCBI Taxonomy" id="3871"/>
    <lineage>
        <taxon>Eukaryota</taxon>
        <taxon>Viridiplantae</taxon>
        <taxon>Streptophyta</taxon>
        <taxon>Embryophyta</taxon>
        <taxon>Tracheophyta</taxon>
        <taxon>Spermatophyta</taxon>
        <taxon>Magnoliopsida</taxon>
        <taxon>eudicotyledons</taxon>
        <taxon>Gunneridae</taxon>
        <taxon>Pentapetalae</taxon>
        <taxon>rosids</taxon>
        <taxon>fabids</taxon>
        <taxon>Fabales</taxon>
        <taxon>Fabaceae</taxon>
        <taxon>Papilionoideae</taxon>
        <taxon>50 kb inversion clade</taxon>
        <taxon>genistoids sensu lato</taxon>
        <taxon>core genistoids</taxon>
        <taxon>Genisteae</taxon>
        <taxon>Lupinus</taxon>
    </lineage>
</organism>
<reference key="1">
    <citation type="journal article" date="1986" name="FEBS Lett.">
        <title>Amino acid sequence of conglutin delta, a sulfur-rich seed protein of Lupinus angustifolius L. Sequence homology with the C-III alpha-amylase inhibitor from wheat.</title>
        <authorList>
            <person name="Lilley G.G."/>
            <person name="Inglis A.S."/>
        </authorList>
    </citation>
    <scope>PROTEIN SEQUENCE</scope>
    <scope>DISULFIDE BOND</scope>
    <scope>SUBUNIT</scope>
    <source>
        <strain>cv. White</strain>
    </source>
</reference>
<reference key="2">
    <citation type="journal article" date="2011" name="BMC Plant Biol.">
        <title>Identification and characterisation of seed storage protein transcripts from Lupinus angustifolius.</title>
        <authorList>
            <person name="Foley R.C."/>
            <person name="Gao L.-L."/>
            <person name="Spriggs A."/>
            <person name="Soo L.Y.C."/>
            <person name="Goggin D.E."/>
            <person name="Smith P.M.C."/>
            <person name="Atkins C.A."/>
            <person name="Singh K.B."/>
        </authorList>
    </citation>
    <scope>NUCLEOTIDE SEQUENCE [MRNA]</scope>
    <scope>DEVELOPMENTAL STAGE</scope>
    <scope>ALLERGEN</scope>
    <source>
        <strain>cv. Tanjil</strain>
        <tissue>Seed</tissue>
    </source>
</reference>
<reference key="3">
    <citation type="journal article" date="2017" name="Plant Biotechnol. J.">
        <title>A comprehensive draft genome sequence for lupin (Lupinus angustifolius), an emerging health food: insights into plant-microbe interactions and legume evolution.</title>
        <authorList>
            <person name="Hane J.K."/>
            <person name="Ming Y."/>
            <person name="Kamphuis L.G."/>
            <person name="Nelson M.N."/>
            <person name="Garg G."/>
            <person name="Atkins C.A."/>
            <person name="Bayer P.E."/>
            <person name="Bravo A."/>
            <person name="Bringans S."/>
            <person name="Cannon S."/>
            <person name="Edwards D."/>
            <person name="Foley R."/>
            <person name="Gao L.L."/>
            <person name="Harrison M.J."/>
            <person name="Huang W."/>
            <person name="Hurgobin B."/>
            <person name="Li S."/>
            <person name="Liu C.W."/>
            <person name="McGrath A."/>
            <person name="Morahan G."/>
            <person name="Murray J."/>
            <person name="Weller J."/>
            <person name="Jian J."/>
            <person name="Singh K.B."/>
        </authorList>
    </citation>
    <scope>NUCLEOTIDE SEQUENCE [LARGE SCALE GENOMIC DNA]</scope>
    <source>
        <strain>cv. Tanjil</strain>
        <tissue>Seedling</tissue>
    </source>
</reference>
<reference key="4">
    <citation type="journal article" date="1997" name="Plant Mol. Biol.">
        <title>Transcription of genes for conglutin gamma and a leginsulin-like protein in narrow-leafed lupin.</title>
        <authorList>
            <person name="Ilgoutz S.C."/>
            <person name="Knittel N."/>
            <person name="Lin J.M."/>
            <person name="Sterle S."/>
            <person name="Gayler K.R."/>
        </authorList>
    </citation>
    <scope>TISSUE SPECIFICITY</scope>
    <scope>DEVELOPMENTAL STAGE</scope>
    <source>
        <strain>cv. Unicrop</strain>
    </source>
</reference>
<keyword id="KW-0020">Allergen</keyword>
<keyword id="KW-0903">Direct protein sequencing</keyword>
<keyword id="KW-1015">Disulfide bond</keyword>
<keyword id="KW-0256">Endoplasmic reticulum</keyword>
<keyword id="KW-1185">Reference proteome</keyword>
<keyword id="KW-0732">Signal</keyword>
<protein>
    <recommendedName>
        <fullName evidence="8">Conglutin delta 1</fullName>
    </recommendedName>
    <allergenName evidence="10">Lup an delta-conglutin</allergenName>
    <component>
        <recommendedName>
            <fullName evidence="9">Conglutin delta-2 large chain</fullName>
        </recommendedName>
    </component>
    <component>
        <recommendedName>
            <fullName evidence="9">Conglutin delta-2 small chain</fullName>
        </recommendedName>
    </component>
</protein>
<evidence type="ECO:0000250" key="1">
    <source>
        <dbReference type="UniProtKB" id="P09930"/>
    </source>
</evidence>
<evidence type="ECO:0000250" key="2">
    <source>
        <dbReference type="UniProtKB" id="Q6PSU2"/>
    </source>
</evidence>
<evidence type="ECO:0000250" key="3">
    <source>
        <dbReference type="UniProtKB" id="Q99235"/>
    </source>
</evidence>
<evidence type="ECO:0000255" key="4"/>
<evidence type="ECO:0000269" key="5">
    <source>
    </source>
</evidence>
<evidence type="ECO:0000269" key="6">
    <source>
    </source>
</evidence>
<evidence type="ECO:0000269" key="7">
    <source ref="1"/>
</evidence>
<evidence type="ECO:0000303" key="8">
    <source>
    </source>
</evidence>
<evidence type="ECO:0000303" key="9">
    <source ref="1"/>
</evidence>
<evidence type="ECO:0000305" key="10"/>
<evidence type="ECO:0000305" key="11">
    <source>
    </source>
</evidence>
<evidence type="ECO:0000312" key="12">
    <source>
        <dbReference type="EMBL" id="OIW12090.1"/>
    </source>
</evidence>
<dbReference type="EMBL" id="HQ670418">
    <property type="protein sequence ID" value="AEB33721.1"/>
    <property type="molecule type" value="mRNA"/>
</dbReference>
<dbReference type="EMBL" id="KV861577">
    <property type="protein sequence ID" value="OIW12090.1"/>
    <property type="molecule type" value="Genomic_DNA"/>
</dbReference>
<dbReference type="EMBL" id="CM007365">
    <property type="status" value="NOT_ANNOTATED_CDS"/>
    <property type="molecule type" value="Genomic_DNA"/>
</dbReference>
<dbReference type="PIR" id="A23617">
    <property type="entry name" value="A23617"/>
</dbReference>
<dbReference type="PIR" id="B23617">
    <property type="entry name" value="B23617"/>
</dbReference>
<dbReference type="RefSeq" id="XP_019443091.1">
    <property type="nucleotide sequence ID" value="XM_019587546.1"/>
</dbReference>
<dbReference type="SMR" id="F5B8W8"/>
<dbReference type="STRING" id="3871.F5B8W8"/>
<dbReference type="Allergome" id="7698">
    <property type="allergen name" value="Lup an delta_Conglutin"/>
</dbReference>
<dbReference type="EnsemblPlants" id="OIW12090">
    <property type="protein sequence ID" value="OIW12090"/>
    <property type="gene ID" value="TanjilG_06295"/>
</dbReference>
<dbReference type="Gramene" id="OIW12090">
    <property type="protein sequence ID" value="OIW12090"/>
    <property type="gene ID" value="TanjilG_06295"/>
</dbReference>
<dbReference type="KEGG" id="lang:109347615"/>
<dbReference type="OMA" id="PCEKHIM"/>
<dbReference type="OrthoDB" id="1424936at2759"/>
<dbReference type="Proteomes" id="UP000188354">
    <property type="component" value="Chromosome LG05"/>
</dbReference>
<dbReference type="GO" id="GO:0005783">
    <property type="term" value="C:endoplasmic reticulum"/>
    <property type="evidence" value="ECO:0007669"/>
    <property type="project" value="UniProtKB-SubCell"/>
</dbReference>
<dbReference type="GO" id="GO:0045735">
    <property type="term" value="F:nutrient reservoir activity"/>
    <property type="evidence" value="ECO:0007669"/>
    <property type="project" value="InterPro"/>
</dbReference>
<dbReference type="Gene3D" id="1.10.110.10">
    <property type="entry name" value="Plant lipid-transfer and hydrophobic proteins"/>
    <property type="match status" value="1"/>
</dbReference>
<dbReference type="InterPro" id="IPR036312">
    <property type="entry name" value="Bifun_inhib/LTP/seed_sf"/>
</dbReference>
<dbReference type="InterPro" id="IPR016140">
    <property type="entry name" value="Bifunc_inhib/LTP/seed_store"/>
</dbReference>
<dbReference type="InterPro" id="IPR000617">
    <property type="entry name" value="Napin/2SS/CON"/>
</dbReference>
<dbReference type="PANTHER" id="PTHR35496">
    <property type="entry name" value="2S SEED STORAGE PROTEIN 1-RELATED"/>
    <property type="match status" value="1"/>
</dbReference>
<dbReference type="PANTHER" id="PTHR35496:SF20">
    <property type="entry name" value="2S SEED STORAGE PROTEIN 1-RELATED"/>
    <property type="match status" value="1"/>
</dbReference>
<dbReference type="SMART" id="SM00499">
    <property type="entry name" value="AAI"/>
    <property type="match status" value="1"/>
</dbReference>
<dbReference type="SUPFAM" id="SSF47699">
    <property type="entry name" value="Bifunctional inhibitor/lipid-transfer protein/seed storage 2S albumin"/>
    <property type="match status" value="1"/>
</dbReference>
<proteinExistence type="evidence at protein level"/>
<sequence>MAKLTILIALVAALVLVVHTSAFRSSEQSCKRQLQQVNLRHCENHIDQRIQQQQEEEEDRARKLRGIKHVILRHKSSQESEESEELDQCCEQLNELNSQRCQCRALQQIYESQSEQCEGRQQEQQLEGELEKLPRICGFGPLRRCNINPDEE</sequence>
<comment type="subunit">
    <text evidence="7">Heterodimer of a small chain and a large chain; disulfide-linked.</text>
</comment>
<comment type="subcellular location">
    <subcellularLocation>
        <location evidence="3">Endoplasmic reticulum</location>
    </subcellularLocation>
</comment>
<comment type="tissue specificity">
    <text evidence="6">Expressed in developing cotyledons and in the embryonic axis of germinating seeds.</text>
</comment>
<comment type="developmental stage">
    <text evidence="5 6">Accumulates during seed development.</text>
</comment>
<comment type="allergen">
    <text evidence="11">Causes an allergic reaction in human.</text>
</comment>
<comment type="similarity">
    <text evidence="10">Belongs to the 2S seed storage albumins family.</text>
</comment>
<name>COND1_LUPAN</name>
<gene>
    <name evidence="12" type="ORF">TanjilG_06295</name>
</gene>
<feature type="signal peptide" evidence="4">
    <location>
        <begin position="1"/>
        <end position="22"/>
    </location>
</feature>
<feature type="chain" id="PRO_5010962431" description="Conglutin delta 1">
    <location>
        <begin position="23"/>
        <end position="152"/>
    </location>
</feature>
<feature type="chain" id="PRO_0000221439" description="Conglutin delta-2 small chain">
    <location>
        <begin position="23"/>
        <end position="59"/>
    </location>
</feature>
<feature type="chain" id="PRO_0000221438" description="Conglutin delta-2 large chain">
    <location>
        <begin position="73"/>
        <end position="152"/>
    </location>
</feature>
<feature type="disulfide bond" evidence="2">
    <location>
        <begin position="30"/>
        <end position="101"/>
    </location>
</feature>
<feature type="disulfide bond" description="Interchain (between small and large chains, with C-101 in large chain)" evidence="1">
    <location>
        <position position="30"/>
    </location>
</feature>
<feature type="disulfide bond" description="Or C-45 with C-104" evidence="2">
    <location>
        <begin position="42"/>
        <end position="89"/>
    </location>
</feature>
<feature type="disulfide bond" description="Interchain (between small and large chains, with C-89 or C-90 in large chain)" evidence="1">
    <location>
        <position position="42"/>
    </location>
</feature>
<feature type="disulfide bond" description="Interchain (between small and large chains, with C-42 in small chain) (or C-90)" evidence="7">
    <location>
        <position position="89"/>
    </location>
</feature>
<feature type="disulfide bond" description="Or C-103 with C-152" evidence="2">
    <location>
        <begin position="90"/>
        <end position="137"/>
    </location>
</feature>
<feature type="disulfide bond" description="Or C-89 with C-137" evidence="7">
    <location>
        <begin position="90"/>
        <end position="137"/>
    </location>
</feature>
<feature type="disulfide bond" description="Interchain (between small and large chains, with C-30 in small chain)" evidence="7">
    <location>
        <position position="101"/>
    </location>
</feature>
<feature type="disulfide bond" evidence="7">
    <location>
        <begin position="103"/>
        <end position="145"/>
    </location>
</feature>